<keyword id="KW-0963">Cytoplasm</keyword>
<keyword id="KW-0489">Methyltransferase</keyword>
<keyword id="KW-0545">Nucleotide biosynthesis</keyword>
<keyword id="KW-1185">Reference proteome</keyword>
<keyword id="KW-0808">Transferase</keyword>
<protein>
    <recommendedName>
        <fullName evidence="1">Putative thymidylate synthase</fullName>
        <shortName evidence="1">TS</shortName>
        <shortName evidence="1">TSase</shortName>
        <ecNumber evidence="1">2.1.1.-</ecNumber>
    </recommendedName>
</protein>
<organism>
    <name type="scientific">Methanopyrus kandleri (strain AV19 / DSM 6324 / JCM 9639 / NBRC 100938)</name>
    <dbReference type="NCBI Taxonomy" id="190192"/>
    <lineage>
        <taxon>Archaea</taxon>
        <taxon>Methanobacteriati</taxon>
        <taxon>Methanobacteriota</taxon>
        <taxon>Methanomada group</taxon>
        <taxon>Methanopyri</taxon>
        <taxon>Methanopyrales</taxon>
        <taxon>Methanopyraceae</taxon>
        <taxon>Methanopyrus</taxon>
    </lineage>
</organism>
<gene>
    <name evidence="1" type="primary">thyA</name>
    <name type="ordered locus">MK1370</name>
</gene>
<evidence type="ECO:0000255" key="1">
    <source>
        <dbReference type="HAMAP-Rule" id="MF_01686"/>
    </source>
</evidence>
<comment type="function">
    <text evidence="1">May catalyze the biosynthesis of dTMP using an unknown cosubstrate.</text>
</comment>
<comment type="pathway">
    <text evidence="1">Pyrimidine metabolism; dTTP biosynthesis.</text>
</comment>
<comment type="subunit">
    <text evidence="1">Monomer.</text>
</comment>
<comment type="subcellular location">
    <subcellularLocation>
        <location evidence="1">Cytoplasm</location>
    </subcellularLocation>
</comment>
<comment type="similarity">
    <text evidence="1">Belongs to the thymidylate synthase family. Archaeal-type ThyA subfamily.</text>
</comment>
<name>TYSY_METKA</name>
<feature type="chain" id="PRO_0000141056" description="Putative thymidylate synthase">
    <location>
        <begin position="1"/>
        <end position="209"/>
    </location>
</feature>
<feature type="active site" evidence="1">
    <location>
        <position position="137"/>
    </location>
</feature>
<reference key="1">
    <citation type="journal article" date="2002" name="Proc. Natl. Acad. Sci. U.S.A.">
        <title>The complete genome of hyperthermophile Methanopyrus kandleri AV19 and monophyly of archaeal methanogens.</title>
        <authorList>
            <person name="Slesarev A.I."/>
            <person name="Mezhevaya K.V."/>
            <person name="Makarova K.S."/>
            <person name="Polushin N.N."/>
            <person name="Shcherbinina O.V."/>
            <person name="Shakhova V.V."/>
            <person name="Belova G.I."/>
            <person name="Aravind L."/>
            <person name="Natale D.A."/>
            <person name="Rogozin I.B."/>
            <person name="Tatusov R.L."/>
            <person name="Wolf Y.I."/>
            <person name="Stetter K.O."/>
            <person name="Malykh A.G."/>
            <person name="Koonin E.V."/>
            <person name="Kozyavkin S.A."/>
        </authorList>
    </citation>
    <scope>NUCLEOTIDE SEQUENCE [LARGE SCALE GENOMIC DNA]</scope>
    <source>
        <strain>AV19 / DSM 6324 / JCM 9639 / NBRC 100938</strain>
    </source>
</reference>
<accession>Q8TVL9</accession>
<sequence length="209" mass="23781">MLGKGRPLVVRGRTVEQVWRQAVTGIKVHGEKVERERGPVKEVRGLIAHLEPSGPESFDIPDDYPLDEHSVRAYEDQLLDPELRGFEYTYGHRLRRYFGLDQVTKIVERLSESNNTRRAIAVTWDPRRDLDEEEVPCLTALQLQSDGGSGLELHAFYRSWDVGKALVANMIALRRLQEHVAERAGLEPTTLTVYAANAHVYEEDLPDLP</sequence>
<dbReference type="EC" id="2.1.1.-" evidence="1"/>
<dbReference type="EMBL" id="AE009439">
    <property type="protein sequence ID" value="AAM02583.1"/>
    <property type="molecule type" value="Genomic_DNA"/>
</dbReference>
<dbReference type="RefSeq" id="WP_011019738.1">
    <property type="nucleotide sequence ID" value="NC_003551.1"/>
</dbReference>
<dbReference type="SMR" id="Q8TVL9"/>
<dbReference type="FunCoup" id="Q8TVL9">
    <property type="interactions" value="21"/>
</dbReference>
<dbReference type="STRING" id="190192.MK1370"/>
<dbReference type="PaxDb" id="190192-MK1370"/>
<dbReference type="EnsemblBacteria" id="AAM02583">
    <property type="protein sequence ID" value="AAM02583"/>
    <property type="gene ID" value="MK1370"/>
</dbReference>
<dbReference type="GeneID" id="1477965"/>
<dbReference type="KEGG" id="mka:MK1370"/>
<dbReference type="HOGENOM" id="CLU_084975_0_0_2"/>
<dbReference type="InParanoid" id="Q8TVL9"/>
<dbReference type="OrthoDB" id="50118at2157"/>
<dbReference type="UniPathway" id="UPA00575"/>
<dbReference type="Proteomes" id="UP000001826">
    <property type="component" value="Chromosome"/>
</dbReference>
<dbReference type="GO" id="GO:0005829">
    <property type="term" value="C:cytosol"/>
    <property type="evidence" value="ECO:0007669"/>
    <property type="project" value="TreeGrafter"/>
</dbReference>
<dbReference type="GO" id="GO:0004799">
    <property type="term" value="F:thymidylate synthase activity"/>
    <property type="evidence" value="ECO:0007669"/>
    <property type="project" value="UniProtKB-UniRule"/>
</dbReference>
<dbReference type="GO" id="GO:0006231">
    <property type="term" value="P:dTMP biosynthetic process"/>
    <property type="evidence" value="ECO:0007669"/>
    <property type="project" value="UniProtKB-UniRule"/>
</dbReference>
<dbReference type="GO" id="GO:0006235">
    <property type="term" value="P:dTTP biosynthetic process"/>
    <property type="evidence" value="ECO:0007669"/>
    <property type="project" value="UniProtKB-UniRule"/>
</dbReference>
<dbReference type="GO" id="GO:0032259">
    <property type="term" value="P:methylation"/>
    <property type="evidence" value="ECO:0007669"/>
    <property type="project" value="UniProtKB-KW"/>
</dbReference>
<dbReference type="CDD" id="cd00351">
    <property type="entry name" value="TS_Pyrimidine_HMase"/>
    <property type="match status" value="1"/>
</dbReference>
<dbReference type="Gene3D" id="3.30.572.10">
    <property type="entry name" value="Thymidylate synthase/dCMP hydroxymethylase domain"/>
    <property type="match status" value="1"/>
</dbReference>
<dbReference type="HAMAP" id="MF_01686">
    <property type="entry name" value="Thymidy_synth_arch"/>
    <property type="match status" value="1"/>
</dbReference>
<dbReference type="InterPro" id="IPR045097">
    <property type="entry name" value="Thymidate_synth/dCMP_Mease"/>
</dbReference>
<dbReference type="InterPro" id="IPR023451">
    <property type="entry name" value="Thymidate_synth/dCMP_Mease_dom"/>
</dbReference>
<dbReference type="InterPro" id="IPR036926">
    <property type="entry name" value="Thymidate_synth/dCMP_Mease_sf"/>
</dbReference>
<dbReference type="InterPro" id="IPR014620">
    <property type="entry name" value="Thymidylate_synthase_arc"/>
</dbReference>
<dbReference type="NCBIfam" id="TIGR03283">
    <property type="entry name" value="thy_syn_methano"/>
    <property type="match status" value="1"/>
</dbReference>
<dbReference type="PANTHER" id="PTHR11548">
    <property type="entry name" value="THYMIDYLATE SYNTHASE 1"/>
    <property type="match status" value="1"/>
</dbReference>
<dbReference type="PANTHER" id="PTHR11548:SF1">
    <property type="entry name" value="THYMIDYLATE SYNTHASE 1"/>
    <property type="match status" value="1"/>
</dbReference>
<dbReference type="Pfam" id="PF00303">
    <property type="entry name" value="Thymidylat_synt"/>
    <property type="match status" value="1"/>
</dbReference>
<dbReference type="PIRSF" id="PIRSF036752">
    <property type="entry name" value="TSase_MJ051"/>
    <property type="match status" value="1"/>
</dbReference>
<dbReference type="SUPFAM" id="SSF55831">
    <property type="entry name" value="Thymidylate synthase/dCMP hydroxymethylase"/>
    <property type="match status" value="1"/>
</dbReference>
<proteinExistence type="inferred from homology"/>